<name>ISPE_BACC7</name>
<evidence type="ECO:0000255" key="1">
    <source>
        <dbReference type="HAMAP-Rule" id="MF_00061"/>
    </source>
</evidence>
<accession>B7HPV6</accession>
<proteinExistence type="inferred from homology"/>
<reference key="1">
    <citation type="submission" date="2008-10" db="EMBL/GenBank/DDBJ databases">
        <title>Genome sequence of Bacillus cereus AH187.</title>
        <authorList>
            <person name="Dodson R.J."/>
            <person name="Durkin A.S."/>
            <person name="Rosovitz M.J."/>
            <person name="Rasko D.A."/>
            <person name="Kolsto A.B."/>
            <person name="Okstad O.A."/>
            <person name="Ravel J."/>
            <person name="Sutton G."/>
        </authorList>
    </citation>
    <scope>NUCLEOTIDE SEQUENCE [LARGE SCALE GENOMIC DNA]</scope>
    <source>
        <strain>AH187</strain>
    </source>
</reference>
<sequence>MKLLVKAPAKINLSLDVLGKRQDGYHEVKMIMTTIDLADRLELMELAEDRIEILSHNRYVPDDQRNLAYQAAKLLKEKFNVKKGVSITIEKTIPVAAGLAGGSSDAAATLRGLNKLWNLGLTIDQLAELGAEIGSDVSFCVYGGTAIATGRGEQIEHIKTPPSCWVILAKPHIGVSTADVYGNLKLNRVTHPNVDKMVDVINAGDYKGICDTVGNVLEDVTFAMHPEVARIKAQMKRFGADAVLMSGSGPTVFGLVHHDSRMHRIYNGLKGFCEQVYAVRLLGERETLE</sequence>
<keyword id="KW-0067">ATP-binding</keyword>
<keyword id="KW-0414">Isoprene biosynthesis</keyword>
<keyword id="KW-0418">Kinase</keyword>
<keyword id="KW-0547">Nucleotide-binding</keyword>
<keyword id="KW-0808">Transferase</keyword>
<dbReference type="EC" id="2.7.1.148" evidence="1"/>
<dbReference type="EMBL" id="CP001177">
    <property type="protein sequence ID" value="ACJ79950.1"/>
    <property type="molecule type" value="Genomic_DNA"/>
</dbReference>
<dbReference type="SMR" id="B7HPV6"/>
<dbReference type="KEGG" id="bcr:BCAH187_A0054"/>
<dbReference type="HOGENOM" id="CLU_053057_1_1_9"/>
<dbReference type="UniPathway" id="UPA00056">
    <property type="reaction ID" value="UER00094"/>
</dbReference>
<dbReference type="Proteomes" id="UP000002214">
    <property type="component" value="Chromosome"/>
</dbReference>
<dbReference type="GO" id="GO:0050515">
    <property type="term" value="F:4-(cytidine 5'-diphospho)-2-C-methyl-D-erythritol kinase activity"/>
    <property type="evidence" value="ECO:0007669"/>
    <property type="project" value="UniProtKB-UniRule"/>
</dbReference>
<dbReference type="GO" id="GO:0005524">
    <property type="term" value="F:ATP binding"/>
    <property type="evidence" value="ECO:0007669"/>
    <property type="project" value="UniProtKB-UniRule"/>
</dbReference>
<dbReference type="GO" id="GO:0019288">
    <property type="term" value="P:isopentenyl diphosphate biosynthetic process, methylerythritol 4-phosphate pathway"/>
    <property type="evidence" value="ECO:0007669"/>
    <property type="project" value="UniProtKB-UniRule"/>
</dbReference>
<dbReference type="GO" id="GO:0016114">
    <property type="term" value="P:terpenoid biosynthetic process"/>
    <property type="evidence" value="ECO:0007669"/>
    <property type="project" value="InterPro"/>
</dbReference>
<dbReference type="FunFam" id="3.30.230.10:FF:000029">
    <property type="entry name" value="4-diphosphocytidyl-2-C-methyl-D-erythritol kinase"/>
    <property type="match status" value="1"/>
</dbReference>
<dbReference type="FunFam" id="3.30.70.890:FF:000006">
    <property type="entry name" value="4-diphosphocytidyl-2-C-methyl-D-erythritol kinase"/>
    <property type="match status" value="1"/>
</dbReference>
<dbReference type="Gene3D" id="3.30.230.10">
    <property type="match status" value="1"/>
</dbReference>
<dbReference type="Gene3D" id="3.30.70.890">
    <property type="entry name" value="GHMP kinase, C-terminal domain"/>
    <property type="match status" value="1"/>
</dbReference>
<dbReference type="HAMAP" id="MF_00061">
    <property type="entry name" value="IspE"/>
    <property type="match status" value="1"/>
</dbReference>
<dbReference type="InterPro" id="IPR013750">
    <property type="entry name" value="GHMP_kinase_C_dom"/>
</dbReference>
<dbReference type="InterPro" id="IPR036554">
    <property type="entry name" value="GHMP_kinase_C_sf"/>
</dbReference>
<dbReference type="InterPro" id="IPR006204">
    <property type="entry name" value="GHMP_kinase_N_dom"/>
</dbReference>
<dbReference type="InterPro" id="IPR004424">
    <property type="entry name" value="IspE"/>
</dbReference>
<dbReference type="InterPro" id="IPR020568">
    <property type="entry name" value="Ribosomal_Su5_D2-typ_SF"/>
</dbReference>
<dbReference type="InterPro" id="IPR014721">
    <property type="entry name" value="Ribsml_uS5_D2-typ_fold_subgr"/>
</dbReference>
<dbReference type="NCBIfam" id="TIGR00154">
    <property type="entry name" value="ispE"/>
    <property type="match status" value="1"/>
</dbReference>
<dbReference type="NCBIfam" id="NF011202">
    <property type="entry name" value="PRK14608.1"/>
    <property type="match status" value="1"/>
</dbReference>
<dbReference type="PANTHER" id="PTHR43527">
    <property type="entry name" value="4-DIPHOSPHOCYTIDYL-2-C-METHYL-D-ERYTHRITOL KINASE, CHLOROPLASTIC"/>
    <property type="match status" value="1"/>
</dbReference>
<dbReference type="PANTHER" id="PTHR43527:SF2">
    <property type="entry name" value="4-DIPHOSPHOCYTIDYL-2-C-METHYL-D-ERYTHRITOL KINASE, CHLOROPLASTIC"/>
    <property type="match status" value="1"/>
</dbReference>
<dbReference type="Pfam" id="PF08544">
    <property type="entry name" value="GHMP_kinases_C"/>
    <property type="match status" value="1"/>
</dbReference>
<dbReference type="Pfam" id="PF00288">
    <property type="entry name" value="GHMP_kinases_N"/>
    <property type="match status" value="1"/>
</dbReference>
<dbReference type="PIRSF" id="PIRSF010376">
    <property type="entry name" value="IspE"/>
    <property type="match status" value="1"/>
</dbReference>
<dbReference type="SUPFAM" id="SSF55060">
    <property type="entry name" value="GHMP Kinase, C-terminal domain"/>
    <property type="match status" value="1"/>
</dbReference>
<dbReference type="SUPFAM" id="SSF54211">
    <property type="entry name" value="Ribosomal protein S5 domain 2-like"/>
    <property type="match status" value="1"/>
</dbReference>
<organism>
    <name type="scientific">Bacillus cereus (strain AH187)</name>
    <dbReference type="NCBI Taxonomy" id="405534"/>
    <lineage>
        <taxon>Bacteria</taxon>
        <taxon>Bacillati</taxon>
        <taxon>Bacillota</taxon>
        <taxon>Bacilli</taxon>
        <taxon>Bacillales</taxon>
        <taxon>Bacillaceae</taxon>
        <taxon>Bacillus</taxon>
        <taxon>Bacillus cereus group</taxon>
    </lineage>
</organism>
<gene>
    <name evidence="1" type="primary">ispE</name>
    <name type="ordered locus">BCAH187_A0054</name>
</gene>
<feature type="chain" id="PRO_1000116924" description="4-diphosphocytidyl-2-C-methyl-D-erythritol kinase">
    <location>
        <begin position="1"/>
        <end position="289"/>
    </location>
</feature>
<feature type="active site" evidence="1">
    <location>
        <position position="10"/>
    </location>
</feature>
<feature type="active site" evidence="1">
    <location>
        <position position="136"/>
    </location>
</feature>
<feature type="binding site" evidence="1">
    <location>
        <begin position="94"/>
        <end position="104"/>
    </location>
    <ligand>
        <name>ATP</name>
        <dbReference type="ChEBI" id="CHEBI:30616"/>
    </ligand>
</feature>
<protein>
    <recommendedName>
        <fullName evidence="1">4-diphosphocytidyl-2-C-methyl-D-erythritol kinase</fullName>
        <shortName evidence="1">CMK</shortName>
        <ecNumber evidence="1">2.7.1.148</ecNumber>
    </recommendedName>
    <alternativeName>
        <fullName evidence="1">4-(cytidine-5'-diphospho)-2-C-methyl-D-erythritol kinase</fullName>
    </alternativeName>
</protein>
<comment type="function">
    <text evidence="1">Catalyzes the phosphorylation of the position 2 hydroxy group of 4-diphosphocytidyl-2C-methyl-D-erythritol.</text>
</comment>
<comment type="catalytic activity">
    <reaction evidence="1">
        <text>4-CDP-2-C-methyl-D-erythritol + ATP = 4-CDP-2-C-methyl-D-erythritol 2-phosphate + ADP + H(+)</text>
        <dbReference type="Rhea" id="RHEA:18437"/>
        <dbReference type="ChEBI" id="CHEBI:15378"/>
        <dbReference type="ChEBI" id="CHEBI:30616"/>
        <dbReference type="ChEBI" id="CHEBI:57823"/>
        <dbReference type="ChEBI" id="CHEBI:57919"/>
        <dbReference type="ChEBI" id="CHEBI:456216"/>
        <dbReference type="EC" id="2.7.1.148"/>
    </reaction>
</comment>
<comment type="pathway">
    <text evidence="1">Isoprenoid biosynthesis; isopentenyl diphosphate biosynthesis via DXP pathway; isopentenyl diphosphate from 1-deoxy-D-xylulose 5-phosphate: step 3/6.</text>
</comment>
<comment type="similarity">
    <text evidence="1">Belongs to the GHMP kinase family. IspE subfamily.</text>
</comment>